<proteinExistence type="inferred from homology"/>
<gene>
    <name evidence="1" type="primary">hisC</name>
    <name type="ordered locus">ASA_2103</name>
</gene>
<feature type="chain" id="PRO_1000063457" description="Histidinol-phosphate aminotransferase">
    <location>
        <begin position="1"/>
        <end position="355"/>
    </location>
</feature>
<feature type="modified residue" description="N6-(pyridoxal phosphate)lysine" evidence="1">
    <location>
        <position position="211"/>
    </location>
</feature>
<name>HIS8_AERS4</name>
<protein>
    <recommendedName>
        <fullName evidence="1">Histidinol-phosphate aminotransferase</fullName>
        <ecNumber evidence="1">2.6.1.9</ecNumber>
    </recommendedName>
    <alternativeName>
        <fullName evidence="1">Imidazole acetol-phosphate transaminase</fullName>
    </alternativeName>
</protein>
<dbReference type="EC" id="2.6.1.9" evidence="1"/>
<dbReference type="EMBL" id="CP000644">
    <property type="protein sequence ID" value="ABO90169.1"/>
    <property type="molecule type" value="Genomic_DNA"/>
</dbReference>
<dbReference type="RefSeq" id="WP_005311385.1">
    <property type="nucleotide sequence ID" value="NC_009348.1"/>
</dbReference>
<dbReference type="SMR" id="A4SMP7"/>
<dbReference type="STRING" id="29491.GCA_000820065_00713"/>
<dbReference type="KEGG" id="asa:ASA_2103"/>
<dbReference type="PATRIC" id="fig|382245.13.peg.2068"/>
<dbReference type="eggNOG" id="COG0079">
    <property type="taxonomic scope" value="Bacteria"/>
</dbReference>
<dbReference type="HOGENOM" id="CLU_017584_3_1_6"/>
<dbReference type="UniPathway" id="UPA00031">
    <property type="reaction ID" value="UER00012"/>
</dbReference>
<dbReference type="Proteomes" id="UP000000225">
    <property type="component" value="Chromosome"/>
</dbReference>
<dbReference type="GO" id="GO:0004400">
    <property type="term" value="F:histidinol-phosphate transaminase activity"/>
    <property type="evidence" value="ECO:0007669"/>
    <property type="project" value="UniProtKB-UniRule"/>
</dbReference>
<dbReference type="GO" id="GO:0030170">
    <property type="term" value="F:pyridoxal phosphate binding"/>
    <property type="evidence" value="ECO:0007669"/>
    <property type="project" value="InterPro"/>
</dbReference>
<dbReference type="GO" id="GO:0000105">
    <property type="term" value="P:L-histidine biosynthetic process"/>
    <property type="evidence" value="ECO:0007669"/>
    <property type="project" value="UniProtKB-UniRule"/>
</dbReference>
<dbReference type="CDD" id="cd00609">
    <property type="entry name" value="AAT_like"/>
    <property type="match status" value="1"/>
</dbReference>
<dbReference type="Gene3D" id="3.90.1150.10">
    <property type="entry name" value="Aspartate Aminotransferase, domain 1"/>
    <property type="match status" value="1"/>
</dbReference>
<dbReference type="Gene3D" id="3.40.640.10">
    <property type="entry name" value="Type I PLP-dependent aspartate aminotransferase-like (Major domain)"/>
    <property type="match status" value="1"/>
</dbReference>
<dbReference type="HAMAP" id="MF_01023">
    <property type="entry name" value="HisC_aminotrans_2"/>
    <property type="match status" value="1"/>
</dbReference>
<dbReference type="InterPro" id="IPR001917">
    <property type="entry name" value="Aminotrans_II_pyridoxalP_BS"/>
</dbReference>
<dbReference type="InterPro" id="IPR004839">
    <property type="entry name" value="Aminotransferase_I/II_large"/>
</dbReference>
<dbReference type="InterPro" id="IPR005861">
    <property type="entry name" value="HisP_aminotrans"/>
</dbReference>
<dbReference type="InterPro" id="IPR015424">
    <property type="entry name" value="PyrdxlP-dep_Trfase"/>
</dbReference>
<dbReference type="InterPro" id="IPR015421">
    <property type="entry name" value="PyrdxlP-dep_Trfase_major"/>
</dbReference>
<dbReference type="InterPro" id="IPR015422">
    <property type="entry name" value="PyrdxlP-dep_Trfase_small"/>
</dbReference>
<dbReference type="NCBIfam" id="TIGR01141">
    <property type="entry name" value="hisC"/>
    <property type="match status" value="1"/>
</dbReference>
<dbReference type="PANTHER" id="PTHR42885:SF2">
    <property type="entry name" value="HISTIDINOL-PHOSPHATE AMINOTRANSFERASE"/>
    <property type="match status" value="1"/>
</dbReference>
<dbReference type="PANTHER" id="PTHR42885">
    <property type="entry name" value="HISTIDINOL-PHOSPHATE AMINOTRANSFERASE-RELATED"/>
    <property type="match status" value="1"/>
</dbReference>
<dbReference type="Pfam" id="PF00155">
    <property type="entry name" value="Aminotran_1_2"/>
    <property type="match status" value="1"/>
</dbReference>
<dbReference type="SUPFAM" id="SSF53383">
    <property type="entry name" value="PLP-dependent transferases"/>
    <property type="match status" value="1"/>
</dbReference>
<dbReference type="PROSITE" id="PS00599">
    <property type="entry name" value="AA_TRANSFER_CLASS_2"/>
    <property type="match status" value="1"/>
</dbReference>
<evidence type="ECO:0000255" key="1">
    <source>
        <dbReference type="HAMAP-Rule" id="MF_01023"/>
    </source>
</evidence>
<accession>A4SMP7</accession>
<keyword id="KW-0028">Amino-acid biosynthesis</keyword>
<keyword id="KW-0032">Aminotransferase</keyword>
<keyword id="KW-0368">Histidine biosynthesis</keyword>
<keyword id="KW-0663">Pyridoxal phosphate</keyword>
<keyword id="KW-0808">Transferase</keyword>
<reference key="1">
    <citation type="journal article" date="2008" name="BMC Genomics">
        <title>The genome of Aeromonas salmonicida subsp. salmonicida A449: insights into the evolution of a fish pathogen.</title>
        <authorList>
            <person name="Reith M.E."/>
            <person name="Singh R.K."/>
            <person name="Curtis B."/>
            <person name="Boyd J.M."/>
            <person name="Bouevitch A."/>
            <person name="Kimball J."/>
            <person name="Munholland J."/>
            <person name="Murphy C."/>
            <person name="Sarty D."/>
            <person name="Williams J."/>
            <person name="Nash J.H."/>
            <person name="Johnson S.C."/>
            <person name="Brown L.L."/>
        </authorList>
    </citation>
    <scope>NUCLEOTIDE SEQUENCE [LARGE SCALE GENOMIC DNA]</scope>
    <source>
        <strain>A449</strain>
    </source>
</reference>
<comment type="catalytic activity">
    <reaction evidence="1">
        <text>L-histidinol phosphate + 2-oxoglutarate = 3-(imidazol-4-yl)-2-oxopropyl phosphate + L-glutamate</text>
        <dbReference type="Rhea" id="RHEA:23744"/>
        <dbReference type="ChEBI" id="CHEBI:16810"/>
        <dbReference type="ChEBI" id="CHEBI:29985"/>
        <dbReference type="ChEBI" id="CHEBI:57766"/>
        <dbReference type="ChEBI" id="CHEBI:57980"/>
        <dbReference type="EC" id="2.6.1.9"/>
    </reaction>
</comment>
<comment type="cofactor">
    <cofactor evidence="1">
        <name>pyridoxal 5'-phosphate</name>
        <dbReference type="ChEBI" id="CHEBI:597326"/>
    </cofactor>
</comment>
<comment type="pathway">
    <text evidence="1">Amino-acid biosynthesis; L-histidine biosynthesis; L-histidine from 5-phospho-alpha-D-ribose 1-diphosphate: step 7/9.</text>
</comment>
<comment type="subunit">
    <text evidence="1">Homodimer.</text>
</comment>
<comment type="similarity">
    <text evidence="1">Belongs to the class-II pyridoxal-phosphate-dependent aminotransferase family. Histidinol-phosphate aminotransferase subfamily.</text>
</comment>
<sequence length="355" mass="38514">MSIANLARRVVRALTPYQSARRIGGKGHVWLNANEAPQAYPFTIEGNRLNRYPECQPAEVVNGYAAYAGVNPDQVLVSRGADEAIELLIRTFCEAGEDQILICPPTYGMYAISAETCGVGIVEQPLTACRQPDWPAIADRLSDVKLVFLCSPNNPTGDLVGRDGLIALLEKARNRAIIVVDEAYIEFCPKASVVDLLARFPNLVVTRTLSKAFALAGIRCGFTLASTEVIAMLAKVIAPYPIPDPIAQIAAQALSPMGLELMQERVAELNKQKALIKTALTALPCVREVFEDKGNFILVRFVDSAAVFAAMKAAGIILRDFSTKPGLENSIRITIGYQNKMDAVLAVLRDQPVSL</sequence>
<organism>
    <name type="scientific">Aeromonas salmonicida (strain A449)</name>
    <dbReference type="NCBI Taxonomy" id="382245"/>
    <lineage>
        <taxon>Bacteria</taxon>
        <taxon>Pseudomonadati</taxon>
        <taxon>Pseudomonadota</taxon>
        <taxon>Gammaproteobacteria</taxon>
        <taxon>Aeromonadales</taxon>
        <taxon>Aeromonadaceae</taxon>
        <taxon>Aeromonas</taxon>
    </lineage>
</organism>